<evidence type="ECO:0000250" key="1"/>
<evidence type="ECO:0000250" key="2">
    <source>
        <dbReference type="UniProtKB" id="Q06055"/>
    </source>
</evidence>
<evidence type="ECO:0000255" key="3"/>
<evidence type="ECO:0000269" key="4">
    <source>
    </source>
</evidence>
<evidence type="ECO:0000269" key="5">
    <source>
    </source>
</evidence>
<evidence type="ECO:0000269" key="6">
    <source ref="5"/>
</evidence>
<evidence type="ECO:0000305" key="7"/>
<evidence type="ECO:0007829" key="8">
    <source>
        <dbReference type="PDB" id="6ZG7"/>
    </source>
</evidence>
<organism>
    <name type="scientific">Bos taurus</name>
    <name type="common">Bovine</name>
    <dbReference type="NCBI Taxonomy" id="9913"/>
    <lineage>
        <taxon>Eukaryota</taxon>
        <taxon>Metazoa</taxon>
        <taxon>Chordata</taxon>
        <taxon>Craniata</taxon>
        <taxon>Vertebrata</taxon>
        <taxon>Euteleostomi</taxon>
        <taxon>Mammalia</taxon>
        <taxon>Eutheria</taxon>
        <taxon>Laurasiatheria</taxon>
        <taxon>Artiodactyla</taxon>
        <taxon>Ruminantia</taxon>
        <taxon>Pecora</taxon>
        <taxon>Bovidae</taxon>
        <taxon>Bovinae</taxon>
        <taxon>Bos</taxon>
    </lineage>
</organism>
<protein>
    <recommendedName>
        <fullName evidence="7">ATP synthase F(0) complex subunit C2, mitochondrial</fullName>
    </recommendedName>
    <alternativeName>
        <fullName>ATP synthase lipid-binding protein</fullName>
    </alternativeName>
    <alternativeName>
        <fullName evidence="2">ATP synthase membrane subunit c locus 2</fullName>
    </alternativeName>
    <alternativeName>
        <fullName>ATP synthase proteolipid P2</fullName>
    </alternativeName>
    <alternativeName>
        <fullName>ATPase protein 9</fullName>
    </alternativeName>
    <alternativeName>
        <fullName>ATPase subunit c</fullName>
    </alternativeName>
</protein>
<keyword id="KW-0002">3D-structure</keyword>
<keyword id="KW-0138">CF(0)</keyword>
<keyword id="KW-0903">Direct protein sequencing</keyword>
<keyword id="KW-0375">Hydrogen ion transport</keyword>
<keyword id="KW-0406">Ion transport</keyword>
<keyword id="KW-0446">Lipid-binding</keyword>
<keyword id="KW-0472">Membrane</keyword>
<keyword id="KW-0488">Methylation</keyword>
<keyword id="KW-0496">Mitochondrion</keyword>
<keyword id="KW-1185">Reference proteome</keyword>
<keyword id="KW-0809">Transit peptide</keyword>
<keyword id="KW-0812">Transmembrane</keyword>
<keyword id="KW-1133">Transmembrane helix</keyword>
<keyword id="KW-0813">Transport</keyword>
<proteinExistence type="evidence at protein level"/>
<gene>
    <name evidence="2" type="primary">ATP5MC2</name>
    <name type="synonym">ATP5G2</name>
</gene>
<accession>P07926</accession>
<accession>P00839</accession>
<accession>Q54A29</accession>
<sequence length="143" mass="15029">MYTCAKFVSTPSLIRRTSTVLSRSLSAVVVRRPETLTDESHSSLAVVPRPLTTSLTPSRSFQTSAISRDIDTAAKFIGAGAATVGVAGSGAGIGTVFGSLIIGYARNPSLKQQLFSYAILGFALSEAMGLFCLMVAFLILFAM</sequence>
<comment type="function">
    <text>Mitochondrial membrane ATP synthase (F(1)F(0) ATP synthase or Complex V) produces ATP from ADP in the presence of a proton gradient across the membrane which is generated by electron transport complexes of the respiratory chain. F-type ATPases consist of two structural domains, F(1) - containing the extramembraneous catalytic core and F(0) - containing the membrane proton channel, linked together by a central stalk and a peripheral stalk. During catalysis, ATP synthesis in the catalytic domain of F(1) is coupled via a rotary mechanism of the central stalk subunits to proton translocation. Part of the complex F(0) domain. A homomeric c-ring of probably 10 subunits is part of the complex rotary element.</text>
</comment>
<comment type="subunit">
    <text evidence="2">F-type ATPases have 2 components, CF(1) - the catalytic core - and CF(0) - the membrane proton channel. CF(1) has five subunits: alpha(3), beta(3), gamma(1), delta(1), epsilon(1). CF(0) has three main subunits: a, b and c. Interacts with DNAJC30; interaction is direct.</text>
</comment>
<comment type="subcellular location">
    <subcellularLocation>
        <location>Mitochondrion membrane</location>
        <topology>Multi-pass membrane protein</topology>
    </subcellularLocation>
</comment>
<comment type="PTM">
    <text evidence="2">Trimethylated by ATPSCKMT at Lys-111. Methylation is required for proper incorporation of the C subunit into the ATP synthase complex and mitochondrial respiration.</text>
</comment>
<comment type="disease">
    <text evidence="5">This protein is the major protein stored in the storage bodies of animals or humans affected with ceroid lipofuscinosis (Batten disease).</text>
</comment>
<comment type="miscellaneous">
    <text>There are three genes which encode the ATP synthase proteolipid and they specify precursors with different import sequences but identical mature proteins.</text>
</comment>
<comment type="similarity">
    <text evidence="7">Belongs to the ATPase C chain family.</text>
</comment>
<name>AT5G2_BOVIN</name>
<feature type="transit peptide" description="Mitochondrion" evidence="4 6">
    <location>
        <begin position="1"/>
        <end position="68"/>
    </location>
</feature>
<feature type="chain" id="PRO_0000002561" description="ATP synthase F(0) complex subunit C2, mitochondrial">
    <location>
        <begin position="69"/>
        <end position="143"/>
    </location>
</feature>
<feature type="transmembrane region" description="Helical" evidence="3">
    <location>
        <begin position="84"/>
        <end position="104"/>
    </location>
</feature>
<feature type="transmembrane region" description="Helical" evidence="3">
    <location>
        <begin position="119"/>
        <end position="139"/>
    </location>
</feature>
<feature type="site" description="Reversibly protonated during proton transport" evidence="1">
    <location>
        <position position="126"/>
    </location>
</feature>
<feature type="modified residue" description="N6,N6,N6-trimethyllysine" evidence="2">
    <location>
        <position position="111"/>
    </location>
</feature>
<feature type="turn" evidence="8">
    <location>
        <begin position="70"/>
        <end position="73"/>
    </location>
</feature>
<feature type="helix" evidence="8">
    <location>
        <begin position="74"/>
        <end position="82"/>
    </location>
</feature>
<feature type="helix" evidence="8">
    <location>
        <begin position="83"/>
        <end position="85"/>
    </location>
</feature>
<feature type="helix" evidence="8">
    <location>
        <begin position="86"/>
        <end position="106"/>
    </location>
</feature>
<feature type="helix" evidence="8">
    <location>
        <begin position="108"/>
        <end position="110"/>
    </location>
</feature>
<feature type="helix" evidence="8">
    <location>
        <begin position="111"/>
        <end position="140"/>
    </location>
</feature>
<reference key="1">
    <citation type="journal article" date="1985" name="EMBO J.">
        <title>Two genes encoding the bovine mitochondrial ATP synthase proteolipid specify precursors with different import sequences and are expressed in a tissue-specific manner.</title>
        <authorList>
            <person name="Gay N.J."/>
            <person name="Walker J.E."/>
        </authorList>
    </citation>
    <scope>NUCLEOTIDE SEQUENCE [MRNA]</scope>
</reference>
<reference key="2">
    <citation type="journal article" date="1989" name="Biochem. J.">
        <title>DNA sequences of a bovine gene and of two related pseudogenes for the proteolipid subunit of mitochondrial ATP synthase.</title>
        <authorList>
            <person name="Dyer M.R."/>
            <person name="Gay N.J."/>
            <person name="Walker J.E."/>
        </authorList>
    </citation>
    <scope>NUCLEOTIDE SEQUENCE [MRNA]</scope>
</reference>
<reference key="3">
    <citation type="journal article" date="2003" name="Mol. Reprod. Dev.">
        <title>Characterization of gene expression profiles in early bovine pregnancy using a custom cDNA microarray.</title>
        <authorList>
            <person name="Ishiwata H."/>
            <person name="Katsuma S."/>
            <person name="Kizaki K."/>
            <person name="Patel O.V."/>
            <person name="Nakano H."/>
            <person name="Takahashi T."/>
            <person name="Imai K."/>
            <person name="Hirasawa A."/>
            <person name="Shiojima S."/>
            <person name="Ikawa H."/>
            <person name="Suzuki Y."/>
            <person name="Tsujimoto G."/>
            <person name="Izaike Y."/>
            <person name="Todoroki J."/>
            <person name="Hashizume K."/>
        </authorList>
    </citation>
    <scope>NUCLEOTIDE SEQUENCE [LARGE SCALE MRNA]</scope>
</reference>
<reference key="4">
    <citation type="submission" date="2006-01" db="EMBL/GenBank/DDBJ databases">
        <authorList>
            <consortium name="NIH - Mammalian Gene Collection (MGC) project"/>
        </authorList>
    </citation>
    <scope>NUCLEOTIDE SEQUENCE [LARGE SCALE MRNA]</scope>
    <source>
        <strain>Hereford</strain>
        <tissue>Testis</tissue>
    </source>
</reference>
<reference key="5">
    <citation type="book" date="1979" name="Function and molecular aspects of biomembrane transport">
        <title>Amino acid sequence of the ATPase proteolipid from mitochondria, chloroplasts and bacteria (wild type and mutants).</title>
        <editorList>
            <person name="Quagliariello E."/>
            <person name="Palmieri F."/>
            <person name="Papa S."/>
            <person name="Klingenberg M."/>
        </editorList>
        <authorList>
            <person name="Sebald W."/>
            <person name="Hoppe J."/>
            <person name="Wachter E."/>
        </authorList>
    </citation>
    <scope>PROTEIN SEQUENCE OF 69-143</scope>
    <source>
        <tissue>Heart</tissue>
    </source>
</reference>
<reference key="6">
    <citation type="journal article" date="1991" name="Biochemistry">
        <title>Identification of the subunits of F1F0-ATPase from bovine heart mitochondria.</title>
        <authorList>
            <person name="Walker J.E."/>
            <person name="Lutter R."/>
            <person name="Dupuis A."/>
            <person name="Runswick M.J."/>
        </authorList>
    </citation>
    <scope>PROTEIN SEQUENCE OF 69-78</scope>
    <source>
        <tissue>Heart</tissue>
    </source>
</reference>
<reference key="7">
    <citation type="journal article" date="1991" name="Vet. Res. Commun.">
        <title>Bovine ceroid-lipofuscinosis (Batten's disease): the major component stored is the DCCD-reactive proteolipid, subunit C, of mitochondrial ATP synthase.</title>
        <authorList>
            <person name="Martinus R.D."/>
            <person name="Harper P.A."/>
            <person name="Jolly R.D."/>
            <person name="Bayliss S.L."/>
            <person name="Midwinter G.G."/>
            <person name="Shaw G.J."/>
            <person name="Palmer D.N."/>
        </authorList>
    </citation>
    <scope>INVOLVEMENT IN BOVINE CEROID-LIPOFUSCINOSIS</scope>
</reference>
<dbReference type="EMBL" id="X05219">
    <property type="protein sequence ID" value="CAA28846.1"/>
    <property type="molecule type" value="mRNA"/>
</dbReference>
<dbReference type="EMBL" id="AB098947">
    <property type="protein sequence ID" value="BAC56437.1"/>
    <property type="molecule type" value="mRNA"/>
</dbReference>
<dbReference type="EMBL" id="BC111613">
    <property type="protein sequence ID" value="AAI11614.1"/>
    <property type="molecule type" value="mRNA"/>
</dbReference>
<dbReference type="PIR" id="S04230">
    <property type="entry name" value="S04230"/>
</dbReference>
<dbReference type="RefSeq" id="NP_788786.1">
    <property type="nucleotide sequence ID" value="NM_176613.2"/>
</dbReference>
<dbReference type="RefSeq" id="XP_005206194.1">
    <property type="nucleotide sequence ID" value="XM_005206137.4"/>
</dbReference>
<dbReference type="RefSeq" id="XP_005206195.1">
    <property type="nucleotide sequence ID" value="XM_005206138.4"/>
</dbReference>
<dbReference type="PDB" id="6Z1R">
    <property type="method" value="EM"/>
    <property type="resolution" value="3.29 A"/>
    <property type="chains" value="K/L/M/N/O/P/Q/R=69-143"/>
</dbReference>
<dbReference type="PDB" id="6Z1U">
    <property type="method" value="EM"/>
    <property type="resolution" value="3.47 A"/>
    <property type="chains" value="K/L/M/N/O/P/Q/R=69-143"/>
</dbReference>
<dbReference type="PDB" id="6ZG7">
    <property type="method" value="EM"/>
    <property type="resolution" value="3.49 A"/>
    <property type="chains" value="K/L/M/N/O/P/Q/R=69-143"/>
</dbReference>
<dbReference type="PDB" id="6ZG8">
    <property type="method" value="EM"/>
    <property type="resolution" value="3.49 A"/>
    <property type="chains" value="K/L/M/N/O/P/Q/R=69-143"/>
</dbReference>
<dbReference type="PDB" id="6ZIK">
    <property type="method" value="EM"/>
    <property type="resolution" value="3.66 A"/>
    <property type="chains" value="K/L/M/N/O/P/Q/R=69-143"/>
</dbReference>
<dbReference type="PDB" id="6ZIT">
    <property type="method" value="EM"/>
    <property type="resolution" value="3.49 A"/>
    <property type="chains" value="K/L/R=69-143"/>
</dbReference>
<dbReference type="PDB" id="6ZQM">
    <property type="method" value="EM"/>
    <property type="resolution" value="3.29 A"/>
    <property type="chains" value="K/L/M/N/O/P/Q/R=69-143"/>
</dbReference>
<dbReference type="PDB" id="6ZQN">
    <property type="method" value="EM"/>
    <property type="resolution" value="4.00 A"/>
    <property type="chains" value="K/L/M/N/O/P/Q/R=69-143"/>
</dbReference>
<dbReference type="PDB" id="7AJB">
    <property type="method" value="EM"/>
    <property type="resolution" value="9.20 A"/>
    <property type="chains" value="AK/AL/AM/AN/AO/AP/AQ/AR/K/L/M/N/O/P/Q/R=69-143"/>
</dbReference>
<dbReference type="PDB" id="7AJC">
    <property type="method" value="EM"/>
    <property type="resolution" value="11.90 A"/>
    <property type="chains" value="AK/AL/AM/AN/AO/AP/AQ/AR/K/L/M/N/O/P/Q/R=69-143"/>
</dbReference>
<dbReference type="PDB" id="7AJD">
    <property type="method" value="EM"/>
    <property type="resolution" value="9.00 A"/>
    <property type="chains" value="AK/AL/AM/AN/AO/AP/AQ/AR/K/L/M/N/O/P/Q/R=69-143"/>
</dbReference>
<dbReference type="PDB" id="7AJE">
    <property type="method" value="EM"/>
    <property type="resolution" value="9.40 A"/>
    <property type="chains" value="AK/AL/AM/AN/AO/AP/AQ/AR/K/L/M/N/O/P/Q/R=69-143"/>
</dbReference>
<dbReference type="PDB" id="7AJF">
    <property type="method" value="EM"/>
    <property type="resolution" value="8.45 A"/>
    <property type="chains" value="AK/AL/AM/AN/AO/AP/AQ/AR/K/L/M/N/O/P/Q/R=69-143"/>
</dbReference>
<dbReference type="PDB" id="7AJG">
    <property type="method" value="EM"/>
    <property type="resolution" value="10.70 A"/>
    <property type="chains" value="AK/AL/AM/AN/AO/AP/AQ/AR/K/L/M/N/O/P/Q/R=69-143"/>
</dbReference>
<dbReference type="PDB" id="7AJH">
    <property type="method" value="EM"/>
    <property type="resolution" value="9.70 A"/>
    <property type="chains" value="AK/AL/AM/AN/AO/AP/AQ/AR/K/L/M/N/O/P/Q/R=69-143"/>
</dbReference>
<dbReference type="PDB" id="7AJI">
    <property type="method" value="EM"/>
    <property type="resolution" value="11.40 A"/>
    <property type="chains" value="AK/AL/AM/AN/AO/AP/AQ/AR/K/L/M/N/O/P/Q/R=69-143"/>
</dbReference>
<dbReference type="PDB" id="7AJJ">
    <property type="method" value="EM"/>
    <property type="resolution" value="13.10 A"/>
    <property type="chains" value="AK/AL/AM/AN/AO/AP/AQ/AR/K/L/M/N/O/P/Q/R=69-143"/>
</dbReference>
<dbReference type="PDBsum" id="6Z1R"/>
<dbReference type="PDBsum" id="6Z1U"/>
<dbReference type="PDBsum" id="6ZG7"/>
<dbReference type="PDBsum" id="6ZG8"/>
<dbReference type="PDBsum" id="6ZIK"/>
<dbReference type="PDBsum" id="6ZIT"/>
<dbReference type="PDBsum" id="6ZQM"/>
<dbReference type="PDBsum" id="6ZQN"/>
<dbReference type="PDBsum" id="7AJB"/>
<dbReference type="PDBsum" id="7AJC"/>
<dbReference type="PDBsum" id="7AJD"/>
<dbReference type="PDBsum" id="7AJE"/>
<dbReference type="PDBsum" id="7AJF"/>
<dbReference type="PDBsum" id="7AJG"/>
<dbReference type="PDBsum" id="7AJH"/>
<dbReference type="PDBsum" id="7AJI"/>
<dbReference type="PDBsum" id="7AJJ"/>
<dbReference type="EMDB" id="EMD-11039"/>
<dbReference type="EMDB" id="EMD-11040"/>
<dbReference type="EMDB" id="EMD-11195"/>
<dbReference type="EMDB" id="EMD-11196"/>
<dbReference type="EMDB" id="EMD-11227"/>
<dbReference type="EMDB" id="EMD-11229"/>
<dbReference type="EMDB" id="EMD-11368"/>
<dbReference type="EMDB" id="EMD-11369"/>
<dbReference type="EMDB" id="EMD-11428"/>
<dbReference type="EMDB" id="EMD-11429"/>
<dbReference type="EMDB" id="EMD-11430"/>
<dbReference type="SMR" id="P07926"/>
<dbReference type="FunCoup" id="P07926">
    <property type="interactions" value="817"/>
</dbReference>
<dbReference type="STRING" id="9913.ENSBTAP00000007538"/>
<dbReference type="PaxDb" id="9913-ENSBTAP00000007538"/>
<dbReference type="GeneID" id="337887"/>
<dbReference type="KEGG" id="bta:337887"/>
<dbReference type="CTD" id="517"/>
<dbReference type="eggNOG" id="KOG3025">
    <property type="taxonomic scope" value="Eukaryota"/>
</dbReference>
<dbReference type="HOGENOM" id="CLU_116822_1_0_1"/>
<dbReference type="InParanoid" id="P07926"/>
<dbReference type="OrthoDB" id="438052at2759"/>
<dbReference type="TreeFam" id="TF300140"/>
<dbReference type="Proteomes" id="UP000009136">
    <property type="component" value="Unplaced"/>
</dbReference>
<dbReference type="GO" id="GO:0031966">
    <property type="term" value="C:mitochondrial membrane"/>
    <property type="evidence" value="ECO:0007669"/>
    <property type="project" value="UniProtKB-SubCell"/>
</dbReference>
<dbReference type="GO" id="GO:0005739">
    <property type="term" value="C:mitochondrion"/>
    <property type="evidence" value="ECO:0000305"/>
    <property type="project" value="UniProtKB"/>
</dbReference>
<dbReference type="GO" id="GO:0045259">
    <property type="term" value="C:proton-transporting ATP synthase complex"/>
    <property type="evidence" value="ECO:0000314"/>
    <property type="project" value="UniProtKB"/>
</dbReference>
<dbReference type="GO" id="GO:0033177">
    <property type="term" value="C:proton-transporting two-sector ATPase complex, proton-transporting domain"/>
    <property type="evidence" value="ECO:0007669"/>
    <property type="project" value="InterPro"/>
</dbReference>
<dbReference type="GO" id="GO:0008289">
    <property type="term" value="F:lipid binding"/>
    <property type="evidence" value="ECO:0007669"/>
    <property type="project" value="UniProtKB-KW"/>
</dbReference>
<dbReference type="GO" id="GO:0015078">
    <property type="term" value="F:proton transmembrane transporter activity"/>
    <property type="evidence" value="ECO:0007669"/>
    <property type="project" value="InterPro"/>
</dbReference>
<dbReference type="GO" id="GO:0015986">
    <property type="term" value="P:proton motive force-driven ATP synthesis"/>
    <property type="evidence" value="ECO:0000318"/>
    <property type="project" value="GO_Central"/>
</dbReference>
<dbReference type="CDD" id="cd18182">
    <property type="entry name" value="ATP-synt_Fo_c_ATP5G3"/>
    <property type="match status" value="1"/>
</dbReference>
<dbReference type="FunFam" id="1.20.20.10:FF:000003">
    <property type="entry name" value="Atp synthase f complex subunit mitochondrial"/>
    <property type="match status" value="1"/>
</dbReference>
<dbReference type="Gene3D" id="1.20.20.10">
    <property type="entry name" value="F1F0 ATP synthase subunit C"/>
    <property type="match status" value="1"/>
</dbReference>
<dbReference type="HAMAP" id="MF_01396">
    <property type="entry name" value="ATP_synth_c_bact"/>
    <property type="match status" value="1"/>
</dbReference>
<dbReference type="InterPro" id="IPR000454">
    <property type="entry name" value="ATP_synth_F0_csu"/>
</dbReference>
<dbReference type="InterPro" id="IPR020537">
    <property type="entry name" value="ATP_synth_F0_csu_DDCD_BS"/>
</dbReference>
<dbReference type="InterPro" id="IPR038662">
    <property type="entry name" value="ATP_synth_F0_csu_sf"/>
</dbReference>
<dbReference type="InterPro" id="IPR002379">
    <property type="entry name" value="ATPase_proteolipid_c-like_dom"/>
</dbReference>
<dbReference type="InterPro" id="IPR035921">
    <property type="entry name" value="F/V-ATP_Csub_sf"/>
</dbReference>
<dbReference type="PANTHER" id="PTHR10031">
    <property type="entry name" value="ATP SYNTHASE LIPID-BINDING PROTEIN, MITOCHONDRIAL"/>
    <property type="match status" value="1"/>
</dbReference>
<dbReference type="PANTHER" id="PTHR10031:SF0">
    <property type="entry name" value="ATPASE PROTEIN 9"/>
    <property type="match status" value="1"/>
</dbReference>
<dbReference type="Pfam" id="PF00137">
    <property type="entry name" value="ATP-synt_C"/>
    <property type="match status" value="1"/>
</dbReference>
<dbReference type="PRINTS" id="PR00124">
    <property type="entry name" value="ATPASEC"/>
</dbReference>
<dbReference type="SUPFAM" id="SSF81333">
    <property type="entry name" value="F1F0 ATP synthase subunit C"/>
    <property type="match status" value="1"/>
</dbReference>
<dbReference type="PROSITE" id="PS00605">
    <property type="entry name" value="ATPASE_C"/>
    <property type="match status" value="1"/>
</dbReference>